<keyword id="KW-0021">Allosteric enzyme</keyword>
<keyword id="KW-0328">Glycosyltransferase</keyword>
<keyword id="KW-0342">GTP-binding</keyword>
<keyword id="KW-0460">Magnesium</keyword>
<keyword id="KW-0547">Nucleotide-binding</keyword>
<keyword id="KW-1185">Reference proteome</keyword>
<keyword id="KW-0808">Transferase</keyword>
<accession>B9E8F4</accession>
<gene>
    <name evidence="1" type="primary">upp</name>
    <name type="ordered locus">MCCL_1765</name>
</gene>
<proteinExistence type="inferred from homology"/>
<organism>
    <name type="scientific">Macrococcus caseolyticus (strain JCSC5402)</name>
    <name type="common">Macrococcoides caseolyticum</name>
    <dbReference type="NCBI Taxonomy" id="458233"/>
    <lineage>
        <taxon>Bacteria</taxon>
        <taxon>Bacillati</taxon>
        <taxon>Bacillota</taxon>
        <taxon>Bacilli</taxon>
        <taxon>Bacillales</taxon>
        <taxon>Staphylococcaceae</taxon>
        <taxon>Macrococcoides</taxon>
    </lineage>
</organism>
<sequence>MAKVHVFDHPLIQHKLSYIREESTGTKEFRELVDEVGMLMAYEVTRDLELDDVQIKTPVTEMTAKRLSGKKIAVVPILRAGLGMTEGVLKMIPAARVGHIGLYRDPETLQPVEYFAKMPQDIEERDFIVVDPMLATGGSAIEAINSLKKRGAVKIRFMCLVAAPEGVEALQKAHPDVDIYIAGLDEKLNDHGYIVPGLGDAGDRLFGTK</sequence>
<feature type="chain" id="PRO_1000164830" description="Uracil phosphoribosyltransferase">
    <location>
        <begin position="1"/>
        <end position="209"/>
    </location>
</feature>
<feature type="binding site" evidence="1">
    <location>
        <position position="79"/>
    </location>
    <ligand>
        <name>5-phospho-alpha-D-ribose 1-diphosphate</name>
        <dbReference type="ChEBI" id="CHEBI:58017"/>
    </ligand>
</feature>
<feature type="binding site" evidence="1">
    <location>
        <position position="104"/>
    </location>
    <ligand>
        <name>5-phospho-alpha-D-ribose 1-diphosphate</name>
        <dbReference type="ChEBI" id="CHEBI:58017"/>
    </ligand>
</feature>
<feature type="binding site" evidence="1">
    <location>
        <begin position="131"/>
        <end position="139"/>
    </location>
    <ligand>
        <name>5-phospho-alpha-D-ribose 1-diphosphate</name>
        <dbReference type="ChEBI" id="CHEBI:58017"/>
    </ligand>
</feature>
<feature type="binding site" evidence="1">
    <location>
        <position position="194"/>
    </location>
    <ligand>
        <name>uracil</name>
        <dbReference type="ChEBI" id="CHEBI:17568"/>
    </ligand>
</feature>
<feature type="binding site" evidence="1">
    <location>
        <begin position="199"/>
        <end position="201"/>
    </location>
    <ligand>
        <name>uracil</name>
        <dbReference type="ChEBI" id="CHEBI:17568"/>
    </ligand>
</feature>
<feature type="binding site" evidence="1">
    <location>
        <position position="200"/>
    </location>
    <ligand>
        <name>5-phospho-alpha-D-ribose 1-diphosphate</name>
        <dbReference type="ChEBI" id="CHEBI:58017"/>
    </ligand>
</feature>
<dbReference type="EC" id="2.4.2.9" evidence="1"/>
<dbReference type="EMBL" id="AP009484">
    <property type="protein sequence ID" value="BAH18472.1"/>
    <property type="molecule type" value="Genomic_DNA"/>
</dbReference>
<dbReference type="RefSeq" id="WP_015912264.1">
    <property type="nucleotide sequence ID" value="NC_011999.1"/>
</dbReference>
<dbReference type="SMR" id="B9E8F4"/>
<dbReference type="STRING" id="458233.MCCL_1765"/>
<dbReference type="GeneID" id="61130145"/>
<dbReference type="KEGG" id="mcl:MCCL_1765"/>
<dbReference type="eggNOG" id="COG0035">
    <property type="taxonomic scope" value="Bacteria"/>
</dbReference>
<dbReference type="HOGENOM" id="CLU_067096_2_2_9"/>
<dbReference type="OrthoDB" id="9781675at2"/>
<dbReference type="UniPathway" id="UPA00574">
    <property type="reaction ID" value="UER00636"/>
</dbReference>
<dbReference type="Proteomes" id="UP000001383">
    <property type="component" value="Chromosome"/>
</dbReference>
<dbReference type="GO" id="GO:0005525">
    <property type="term" value="F:GTP binding"/>
    <property type="evidence" value="ECO:0007669"/>
    <property type="project" value="UniProtKB-KW"/>
</dbReference>
<dbReference type="GO" id="GO:0000287">
    <property type="term" value="F:magnesium ion binding"/>
    <property type="evidence" value="ECO:0007669"/>
    <property type="project" value="UniProtKB-UniRule"/>
</dbReference>
<dbReference type="GO" id="GO:0004845">
    <property type="term" value="F:uracil phosphoribosyltransferase activity"/>
    <property type="evidence" value="ECO:0007669"/>
    <property type="project" value="UniProtKB-UniRule"/>
</dbReference>
<dbReference type="GO" id="GO:0044206">
    <property type="term" value="P:UMP salvage"/>
    <property type="evidence" value="ECO:0007669"/>
    <property type="project" value="UniProtKB-UniRule"/>
</dbReference>
<dbReference type="GO" id="GO:0006223">
    <property type="term" value="P:uracil salvage"/>
    <property type="evidence" value="ECO:0007669"/>
    <property type="project" value="InterPro"/>
</dbReference>
<dbReference type="CDD" id="cd06223">
    <property type="entry name" value="PRTases_typeI"/>
    <property type="match status" value="1"/>
</dbReference>
<dbReference type="FunFam" id="3.40.50.2020:FF:000003">
    <property type="entry name" value="Uracil phosphoribosyltransferase"/>
    <property type="match status" value="1"/>
</dbReference>
<dbReference type="Gene3D" id="3.40.50.2020">
    <property type="match status" value="1"/>
</dbReference>
<dbReference type="HAMAP" id="MF_01218_B">
    <property type="entry name" value="Upp_B"/>
    <property type="match status" value="1"/>
</dbReference>
<dbReference type="InterPro" id="IPR000836">
    <property type="entry name" value="PRibTrfase_dom"/>
</dbReference>
<dbReference type="InterPro" id="IPR029057">
    <property type="entry name" value="PRTase-like"/>
</dbReference>
<dbReference type="InterPro" id="IPR034332">
    <property type="entry name" value="Upp_B"/>
</dbReference>
<dbReference type="InterPro" id="IPR050054">
    <property type="entry name" value="UPRTase/APRTase"/>
</dbReference>
<dbReference type="InterPro" id="IPR005765">
    <property type="entry name" value="Ura_phspho_trans"/>
</dbReference>
<dbReference type="NCBIfam" id="NF001097">
    <property type="entry name" value="PRK00129.1"/>
    <property type="match status" value="1"/>
</dbReference>
<dbReference type="NCBIfam" id="TIGR01091">
    <property type="entry name" value="upp"/>
    <property type="match status" value="1"/>
</dbReference>
<dbReference type="PANTHER" id="PTHR32315">
    <property type="entry name" value="ADENINE PHOSPHORIBOSYLTRANSFERASE"/>
    <property type="match status" value="1"/>
</dbReference>
<dbReference type="PANTHER" id="PTHR32315:SF4">
    <property type="entry name" value="URACIL PHOSPHORIBOSYLTRANSFERASE, CHLOROPLASTIC"/>
    <property type="match status" value="1"/>
</dbReference>
<dbReference type="Pfam" id="PF14681">
    <property type="entry name" value="UPRTase"/>
    <property type="match status" value="1"/>
</dbReference>
<dbReference type="SUPFAM" id="SSF53271">
    <property type="entry name" value="PRTase-like"/>
    <property type="match status" value="1"/>
</dbReference>
<name>UPP_MACCJ</name>
<evidence type="ECO:0000255" key="1">
    <source>
        <dbReference type="HAMAP-Rule" id="MF_01218"/>
    </source>
</evidence>
<comment type="function">
    <text evidence="1">Catalyzes the conversion of uracil and 5-phospho-alpha-D-ribose 1-diphosphate (PRPP) to UMP and diphosphate.</text>
</comment>
<comment type="catalytic activity">
    <reaction evidence="1">
        <text>UMP + diphosphate = 5-phospho-alpha-D-ribose 1-diphosphate + uracil</text>
        <dbReference type="Rhea" id="RHEA:13017"/>
        <dbReference type="ChEBI" id="CHEBI:17568"/>
        <dbReference type="ChEBI" id="CHEBI:33019"/>
        <dbReference type="ChEBI" id="CHEBI:57865"/>
        <dbReference type="ChEBI" id="CHEBI:58017"/>
        <dbReference type="EC" id="2.4.2.9"/>
    </reaction>
</comment>
<comment type="cofactor">
    <cofactor evidence="1">
        <name>Mg(2+)</name>
        <dbReference type="ChEBI" id="CHEBI:18420"/>
    </cofactor>
    <text evidence="1">Binds 1 Mg(2+) ion per subunit. The magnesium is bound as Mg-PRPP.</text>
</comment>
<comment type="activity regulation">
    <text evidence="1">Allosterically activated by GTP.</text>
</comment>
<comment type="pathway">
    <text evidence="1">Pyrimidine metabolism; UMP biosynthesis via salvage pathway; UMP from uracil: step 1/1.</text>
</comment>
<comment type="similarity">
    <text evidence="1">Belongs to the UPRTase family.</text>
</comment>
<protein>
    <recommendedName>
        <fullName evidence="1">Uracil phosphoribosyltransferase</fullName>
        <ecNumber evidence="1">2.4.2.9</ecNumber>
    </recommendedName>
    <alternativeName>
        <fullName evidence="1">UMP pyrophosphorylase</fullName>
    </alternativeName>
    <alternativeName>
        <fullName evidence="1">UPRTase</fullName>
    </alternativeName>
</protein>
<reference key="1">
    <citation type="journal article" date="2009" name="J. Bacteriol.">
        <title>Complete genome sequence of Macrococcus caseolyticus strain JCSCS5402, reflecting the ancestral genome of the human-pathogenic staphylococci.</title>
        <authorList>
            <person name="Baba T."/>
            <person name="Kuwahara-Arai K."/>
            <person name="Uchiyama I."/>
            <person name="Takeuchi F."/>
            <person name="Ito T."/>
            <person name="Hiramatsu K."/>
        </authorList>
    </citation>
    <scope>NUCLEOTIDE SEQUENCE [LARGE SCALE GENOMIC DNA]</scope>
    <source>
        <strain>JCSC5402</strain>
    </source>
</reference>